<organism>
    <name type="scientific">Leptospira borgpetersenii serovar Hardjo-bovis (strain L550)</name>
    <dbReference type="NCBI Taxonomy" id="355276"/>
    <lineage>
        <taxon>Bacteria</taxon>
        <taxon>Pseudomonadati</taxon>
        <taxon>Spirochaetota</taxon>
        <taxon>Spirochaetia</taxon>
        <taxon>Leptospirales</taxon>
        <taxon>Leptospiraceae</taxon>
        <taxon>Leptospira</taxon>
    </lineage>
</organism>
<gene>
    <name evidence="2" type="primary">folE</name>
    <name type="ordered locus">LBL_0126</name>
</gene>
<comment type="catalytic activity">
    <reaction evidence="2">
        <text>GTP + H2O = 7,8-dihydroneopterin 3'-triphosphate + formate + H(+)</text>
        <dbReference type="Rhea" id="RHEA:17473"/>
        <dbReference type="ChEBI" id="CHEBI:15377"/>
        <dbReference type="ChEBI" id="CHEBI:15378"/>
        <dbReference type="ChEBI" id="CHEBI:15740"/>
        <dbReference type="ChEBI" id="CHEBI:37565"/>
        <dbReference type="ChEBI" id="CHEBI:58462"/>
        <dbReference type="EC" id="3.5.4.16"/>
    </reaction>
</comment>
<comment type="pathway">
    <text evidence="2">Cofactor biosynthesis; 7,8-dihydroneopterin triphosphate biosynthesis; 7,8-dihydroneopterin triphosphate from GTP: step 1/1.</text>
</comment>
<comment type="subunit">
    <text evidence="1">Toroid-shaped homodecamer, composed of two pentamers of five dimers.</text>
</comment>
<comment type="similarity">
    <text evidence="2">Belongs to the GTP cyclohydrolase I family.</text>
</comment>
<proteinExistence type="inferred from homology"/>
<sequence>MEENIVNILKSIGEDPTREGLLNTPKRVKKAYDFLTSGYHVDITKVVNGAIFEESTEGMILVRDIEVYSLCEHHLLPFYGRAHVAYLPNKKIIGISKIPRIVDVFARRLQVQERLTEQIAYAVQEVLDPQGVAVVIKAKHLCMMMRGVEKQNSELFTSCLLGAFKENMVTRSEFLDLIRTGST</sequence>
<keyword id="KW-0342">GTP-binding</keyword>
<keyword id="KW-0378">Hydrolase</keyword>
<keyword id="KW-0479">Metal-binding</keyword>
<keyword id="KW-0547">Nucleotide-binding</keyword>
<keyword id="KW-0554">One-carbon metabolism</keyword>
<keyword id="KW-0862">Zinc</keyword>
<reference key="1">
    <citation type="journal article" date="2006" name="Proc. Natl. Acad. Sci. U.S.A.">
        <title>Genome reduction in Leptospira borgpetersenii reflects limited transmission potential.</title>
        <authorList>
            <person name="Bulach D.M."/>
            <person name="Zuerner R.L."/>
            <person name="Wilson P."/>
            <person name="Seemann T."/>
            <person name="McGrath A."/>
            <person name="Cullen P.A."/>
            <person name="Davis J."/>
            <person name="Johnson M."/>
            <person name="Kuczek E."/>
            <person name="Alt D.P."/>
            <person name="Peterson-Burch B."/>
            <person name="Coppel R.L."/>
            <person name="Rood J.I."/>
            <person name="Davies J.K."/>
            <person name="Adler B."/>
        </authorList>
    </citation>
    <scope>NUCLEOTIDE SEQUENCE [LARGE SCALE GENOMIC DNA]</scope>
    <source>
        <strain>L550</strain>
    </source>
</reference>
<name>GCH1_LEPBL</name>
<evidence type="ECO:0000250" key="1"/>
<evidence type="ECO:0000255" key="2">
    <source>
        <dbReference type="HAMAP-Rule" id="MF_00223"/>
    </source>
</evidence>
<protein>
    <recommendedName>
        <fullName evidence="2">GTP cyclohydrolase 1</fullName>
        <ecNumber evidence="2">3.5.4.16</ecNumber>
    </recommendedName>
    <alternativeName>
        <fullName evidence="2">GTP cyclohydrolase I</fullName>
        <shortName evidence="2">GTP-CH-I</shortName>
    </alternativeName>
</protein>
<accession>Q056J8</accession>
<feature type="chain" id="PRO_1000043704" description="GTP cyclohydrolase 1">
    <location>
        <begin position="1"/>
        <end position="183"/>
    </location>
</feature>
<feature type="binding site" evidence="2">
    <location>
        <position position="71"/>
    </location>
    <ligand>
        <name>Zn(2+)</name>
        <dbReference type="ChEBI" id="CHEBI:29105"/>
    </ligand>
</feature>
<feature type="binding site" evidence="2">
    <location>
        <position position="74"/>
    </location>
    <ligand>
        <name>Zn(2+)</name>
        <dbReference type="ChEBI" id="CHEBI:29105"/>
    </ligand>
</feature>
<feature type="binding site" evidence="2">
    <location>
        <position position="142"/>
    </location>
    <ligand>
        <name>Zn(2+)</name>
        <dbReference type="ChEBI" id="CHEBI:29105"/>
    </ligand>
</feature>
<dbReference type="EC" id="3.5.4.16" evidence="2"/>
<dbReference type="EMBL" id="CP000348">
    <property type="protein sequence ID" value="ABJ77747.1"/>
    <property type="molecule type" value="Genomic_DNA"/>
</dbReference>
<dbReference type="RefSeq" id="WP_011669218.1">
    <property type="nucleotide sequence ID" value="NC_008508.1"/>
</dbReference>
<dbReference type="SMR" id="Q056J8"/>
<dbReference type="KEGG" id="lbl:LBL_0126"/>
<dbReference type="HOGENOM" id="CLU_049768_3_1_12"/>
<dbReference type="UniPathway" id="UPA00848">
    <property type="reaction ID" value="UER00151"/>
</dbReference>
<dbReference type="GO" id="GO:0005737">
    <property type="term" value="C:cytoplasm"/>
    <property type="evidence" value="ECO:0007669"/>
    <property type="project" value="TreeGrafter"/>
</dbReference>
<dbReference type="GO" id="GO:0005525">
    <property type="term" value="F:GTP binding"/>
    <property type="evidence" value="ECO:0007669"/>
    <property type="project" value="UniProtKB-KW"/>
</dbReference>
<dbReference type="GO" id="GO:0003934">
    <property type="term" value="F:GTP cyclohydrolase I activity"/>
    <property type="evidence" value="ECO:0007669"/>
    <property type="project" value="UniProtKB-UniRule"/>
</dbReference>
<dbReference type="GO" id="GO:0008270">
    <property type="term" value="F:zinc ion binding"/>
    <property type="evidence" value="ECO:0007669"/>
    <property type="project" value="UniProtKB-UniRule"/>
</dbReference>
<dbReference type="GO" id="GO:0006730">
    <property type="term" value="P:one-carbon metabolic process"/>
    <property type="evidence" value="ECO:0007669"/>
    <property type="project" value="UniProtKB-UniRule"/>
</dbReference>
<dbReference type="GO" id="GO:0006729">
    <property type="term" value="P:tetrahydrobiopterin biosynthetic process"/>
    <property type="evidence" value="ECO:0007669"/>
    <property type="project" value="TreeGrafter"/>
</dbReference>
<dbReference type="GO" id="GO:0046654">
    <property type="term" value="P:tetrahydrofolate biosynthetic process"/>
    <property type="evidence" value="ECO:0007669"/>
    <property type="project" value="UniProtKB-UniRule"/>
</dbReference>
<dbReference type="FunFam" id="3.30.1130.10:FF:000001">
    <property type="entry name" value="GTP cyclohydrolase 1"/>
    <property type="match status" value="1"/>
</dbReference>
<dbReference type="Gene3D" id="1.10.286.10">
    <property type="match status" value="1"/>
</dbReference>
<dbReference type="Gene3D" id="3.30.1130.10">
    <property type="match status" value="1"/>
</dbReference>
<dbReference type="HAMAP" id="MF_00223">
    <property type="entry name" value="FolE"/>
    <property type="match status" value="1"/>
</dbReference>
<dbReference type="InterPro" id="IPR043133">
    <property type="entry name" value="GTP-CH-I_C/QueF"/>
</dbReference>
<dbReference type="InterPro" id="IPR043134">
    <property type="entry name" value="GTP-CH-I_N"/>
</dbReference>
<dbReference type="InterPro" id="IPR001474">
    <property type="entry name" value="GTP_CycHdrlase_I"/>
</dbReference>
<dbReference type="InterPro" id="IPR018234">
    <property type="entry name" value="GTP_CycHdrlase_I_CS"/>
</dbReference>
<dbReference type="InterPro" id="IPR020602">
    <property type="entry name" value="GTP_CycHdrlase_I_dom"/>
</dbReference>
<dbReference type="NCBIfam" id="TIGR00063">
    <property type="entry name" value="folE"/>
    <property type="match status" value="1"/>
</dbReference>
<dbReference type="NCBIfam" id="NF006825">
    <property type="entry name" value="PRK09347.1-2"/>
    <property type="match status" value="1"/>
</dbReference>
<dbReference type="NCBIfam" id="NF006826">
    <property type="entry name" value="PRK09347.1-3"/>
    <property type="match status" value="1"/>
</dbReference>
<dbReference type="PANTHER" id="PTHR11109:SF7">
    <property type="entry name" value="GTP CYCLOHYDROLASE 1"/>
    <property type="match status" value="1"/>
</dbReference>
<dbReference type="PANTHER" id="PTHR11109">
    <property type="entry name" value="GTP CYCLOHYDROLASE I"/>
    <property type="match status" value="1"/>
</dbReference>
<dbReference type="Pfam" id="PF01227">
    <property type="entry name" value="GTP_cyclohydroI"/>
    <property type="match status" value="1"/>
</dbReference>
<dbReference type="SUPFAM" id="SSF55620">
    <property type="entry name" value="Tetrahydrobiopterin biosynthesis enzymes-like"/>
    <property type="match status" value="1"/>
</dbReference>
<dbReference type="PROSITE" id="PS00859">
    <property type="entry name" value="GTP_CYCLOHYDROL_1_1"/>
    <property type="match status" value="1"/>
</dbReference>
<dbReference type="PROSITE" id="PS00860">
    <property type="entry name" value="GTP_CYCLOHYDROL_1_2"/>
    <property type="match status" value="1"/>
</dbReference>